<comment type="function">
    <text evidence="1">Transmembrane protein which mediates synaptic endocytosis, fitness-based cell culling, neuronal culling, morphogen gradient scaling, and calcium transport. Regulates synaptic endocytosis and hence couples exo- with endocytosis. Controls two major modes of synaptic vesicle (SV) endocytosis in the synaptic boutons of neuromuscular junctions (NMJs); Ca(2+) channel-independent Clathrin-mediated endocytosis (CME) in response to mild stimulation, and Ca(2+) channel-dependent activity-dependent bulk endocytosis (ADBE) in response to strong stimulation. Functions in ADBE and subsequent SV reformation from bulk endosomes by initiating Ca(2+) channel-dependent phosphatidylinositol 4,5-bisphosphate (PtdIns(4,5)P2) compartmentalization in synaptic boutons. There it acts at the periactive zone to provide the low Ca(2+) levels required to initiate Calcineurin activation and upregulate PtdIns(4,5)P2. Conversely PtdIns(4,5)P2 enhances fwe Ca(2+) channel-activity, establishing a positive feedback loop that induces PtdIns(4,5)P2 microdomain at the periactive zone. These microdomains trigger bulk membrane invagination (i.e. ADBE) by triggering actin polymerization while also promoting localization of fwe to bulk endosomes, thereby removing the ADBE trigger to reduce endocytosis and prevent excess membrane uptake. PtdIns(4,5)P2 then promotes SV reformation from the bulk endosomes, to coordinate ADBE and subsequent SV reformation. Different combinations of the flower isoforms at the cell membrane are also required for the identification and elimination of suboptimal or supernumerary cells during development, regeneration, and adulthood. Required for the recognition and elimination of unfit cells in the developing wing during cell competition. In the developing pupal retina, mediates the elimination of unwanted postmitotic neurons, including supernumerary photoreceptor neurons that form at the periphery of the retina and are contained within incomplete ommatidia units. Also required for efficient elimination and replacement of old neurons by newly generated neurons during regeneration in the adult brain following mechanical injury. Downstream of the flower fitness fingerprints, cells identified as unwanted or unfit are eliminated via apoptosis through the expression of ahuizotl (azot). However, the cells marked for elimination by the flower isoforms only undergo apoptosis if additional thresholds are met; (1) their neighboring fit/healthy cells express different levels of the fwe isoforms, and (2) the levels of the protective signal SPARC expressed by the loser or unwanted cells are unable to inhibit caspase activation. These additional thresholds for flower-mediated apoptosis, allows useful cells to recover from transient and limited stress before they are unnecessarily eliminated. Functions with dally and magu in a mechanism of scaling, which utilises apoptosis to ensure that the dpp morphogen gradient, which mediates organ growth, remains proportional to the size of the growing wing. In this mechanism, fwe represses dally- and Magu-dependent activity in expanding the gradient, and dally/Magu inhibits fwe-dependent apoptosis to keep cell death rate low. When the levels of these different proteins are optimally regulated the gradient correctly scales with organ growth but when this fails, fwe-mediated apoptosis is activated to trim the developing tissue to match the correct size of the gradient.</text>
</comment>
<comment type="activity regulation">
    <text evidence="1">Channel activity is inhibited by La(3+), which reduces Ca(2+) influx and thus inhibits it's function in promoting activity-dependent bulk endocytosis (ADBE) in response to high stimuli.</text>
</comment>
<comment type="subunit">
    <text evidence="1">Homomultimer. Associates with the dally/ magu complex.</text>
</comment>
<comment type="subcellular location">
    <subcellularLocation>
        <location evidence="2">Cell membrane</location>
        <topology evidence="2">Multi-pass membrane protein</topology>
    </subcellularLocation>
    <subcellularLocation>
        <location evidence="1">Cytoplasmic vesicle</location>
        <location evidence="1">Secretory vesicle</location>
        <location evidence="1">Synaptic vesicle membrane</location>
        <topology evidence="1">Multi-pass membrane protein</topology>
    </subcellularLocation>
    <subcellularLocation>
        <location evidence="1">Presynaptic cell membrane</location>
    </subcellularLocation>
    <subcellularLocation>
        <location evidence="1">Endosome</location>
    </subcellularLocation>
    <text evidence="1">Upon fusion of the synaptic vesicle (SV) with the presynaptic membrane, protein transfers from the SV to the periactive zones where endocytosis is known to occur. Upon high K(+) stimulation, expression levels in NMJ boutons are higher in bulk endosomes than in synaptic vesicles, suggesting that it is recycled to bulk endosomes after it activates ADBE.</text>
</comment>
<comment type="similarity">
    <text evidence="3">Belongs to the calcium channel flower family.</text>
</comment>
<comment type="sequence caution" evidence="3">
    <conflict type="erroneous gene model prediction">
        <sequence resource="EMBL-CDS" id="EDW76885"/>
    </conflict>
</comment>
<gene>
    <name evidence="1" type="primary">flower</name>
    <name type="ORF">GK20652</name>
</gene>
<proteinExistence type="inferred from homology"/>
<organism>
    <name type="scientific">Drosophila willistoni</name>
    <name type="common">Fruit fly</name>
    <dbReference type="NCBI Taxonomy" id="7260"/>
    <lineage>
        <taxon>Eukaryota</taxon>
        <taxon>Metazoa</taxon>
        <taxon>Ecdysozoa</taxon>
        <taxon>Arthropoda</taxon>
        <taxon>Hexapoda</taxon>
        <taxon>Insecta</taxon>
        <taxon>Pterygota</taxon>
        <taxon>Neoptera</taxon>
        <taxon>Endopterygota</taxon>
        <taxon>Diptera</taxon>
        <taxon>Brachycera</taxon>
        <taxon>Muscomorpha</taxon>
        <taxon>Ephydroidea</taxon>
        <taxon>Drosophilidae</taxon>
        <taxon>Drosophila</taxon>
        <taxon>Sophophora</taxon>
    </lineage>
</organism>
<keyword id="KW-0106">Calcium</keyword>
<keyword id="KW-0107">Calcium channel</keyword>
<keyword id="KW-0109">Calcium transport</keyword>
<keyword id="KW-1003">Cell membrane</keyword>
<keyword id="KW-0966">Cell projection</keyword>
<keyword id="KW-0968">Cytoplasmic vesicle</keyword>
<keyword id="KW-0254">Endocytosis</keyword>
<keyword id="KW-0967">Endosome</keyword>
<keyword id="KW-0407">Ion channel</keyword>
<keyword id="KW-0406">Ion transport</keyword>
<keyword id="KW-0472">Membrane</keyword>
<keyword id="KW-1185">Reference proteome</keyword>
<keyword id="KW-0770">Synapse</keyword>
<keyword id="KW-0812">Transmembrane</keyword>
<keyword id="KW-1133">Transmembrane helix</keyword>
<keyword id="KW-0813">Transport</keyword>
<sequence>MSFAEKITGLLARPNQQQDPAGGPEAPWYLKYGSRLLGIVGAFFAILFGLWNVLSIITLSVSCLVAGIIQMIAGFVVMALEAPCCFVCIDQVNVMADKLDAKPMYFRAGLYCALAVPPIFMCFGLASLFGSGLIFATGVVYGMMALGKKASAADMRAAAQQTDYGGNAATSQAATTSDRAGIVNNAQPFSFTGAVGTDSNV</sequence>
<name>FLOWR_DROWI</name>
<reference evidence="4" key="1">
    <citation type="journal article" date="2007" name="Nature">
        <title>Evolution of genes and genomes on the Drosophila phylogeny.</title>
        <authorList>
            <consortium name="Drosophila 12 genomes consortium"/>
        </authorList>
    </citation>
    <scope>NUCLEOTIDE SEQUENCE [LARGE SCALE GENOMIC DNA]</scope>
    <source>
        <strain evidence="4">Tucson 14030-0811.24</strain>
    </source>
</reference>
<protein>
    <recommendedName>
        <fullName evidence="1">Calcium channel flower</fullName>
    </recommendedName>
</protein>
<dbReference type="EMBL" id="CH963876">
    <property type="protein sequence ID" value="EDW76885.1"/>
    <property type="status" value="ALT_SEQ"/>
    <property type="molecule type" value="Genomic_DNA"/>
</dbReference>
<dbReference type="RefSeq" id="XP_002065899.2">
    <property type="nucleotide sequence ID" value="XM_002065863.2"/>
</dbReference>
<dbReference type="EnsemblMetazoa" id="FBtr0251303">
    <property type="protein sequence ID" value="FBpp0249795"/>
    <property type="gene ID" value="FBgn0222648"/>
</dbReference>
<dbReference type="EnsemblMetazoa" id="XM_023176118.2">
    <property type="protein sequence ID" value="XP_023031886.1"/>
    <property type="gene ID" value="LOC6642910"/>
</dbReference>
<dbReference type="eggNOG" id="KOG4085">
    <property type="taxonomic scope" value="Eukaryota"/>
</dbReference>
<dbReference type="OrthoDB" id="9934994at2759"/>
<dbReference type="Proteomes" id="UP000007798">
    <property type="component" value="Unassembled WGS sequence"/>
</dbReference>
<dbReference type="GO" id="GO:0042995">
    <property type="term" value="C:cell projection"/>
    <property type="evidence" value="ECO:0007669"/>
    <property type="project" value="UniProtKB-KW"/>
</dbReference>
<dbReference type="GO" id="GO:0005768">
    <property type="term" value="C:endosome"/>
    <property type="evidence" value="ECO:0007669"/>
    <property type="project" value="UniProtKB-SubCell"/>
</dbReference>
<dbReference type="GO" id="GO:0042734">
    <property type="term" value="C:presynaptic membrane"/>
    <property type="evidence" value="ECO:0007669"/>
    <property type="project" value="UniProtKB-SubCell"/>
</dbReference>
<dbReference type="GO" id="GO:0030672">
    <property type="term" value="C:synaptic vesicle membrane"/>
    <property type="evidence" value="ECO:0000250"/>
    <property type="project" value="UniProtKB"/>
</dbReference>
<dbReference type="GO" id="GO:0005262">
    <property type="term" value="F:calcium channel activity"/>
    <property type="evidence" value="ECO:0007669"/>
    <property type="project" value="UniProtKB-KW"/>
</dbReference>
<dbReference type="GO" id="GO:0042802">
    <property type="term" value="F:identical protein binding"/>
    <property type="evidence" value="ECO:0007669"/>
    <property type="project" value="EnsemblMetazoa"/>
</dbReference>
<dbReference type="GO" id="GO:0150008">
    <property type="term" value="P:bulk synaptic vesicle endocytosis"/>
    <property type="evidence" value="ECO:0007669"/>
    <property type="project" value="EnsemblMetazoa"/>
</dbReference>
<dbReference type="GO" id="GO:0035212">
    <property type="term" value="P:cell competition in a multicellular organism"/>
    <property type="evidence" value="ECO:0007669"/>
    <property type="project" value="EnsemblMetazoa"/>
</dbReference>
<dbReference type="GO" id="GO:0150007">
    <property type="term" value="P:clathrin-dependent synaptic vesicle endocytosis"/>
    <property type="evidence" value="ECO:0007669"/>
    <property type="project" value="EnsemblMetazoa"/>
</dbReference>
<dbReference type="GO" id="GO:0046530">
    <property type="term" value="P:photoreceptor cell differentiation"/>
    <property type="evidence" value="ECO:0000250"/>
    <property type="project" value="UniProtKB"/>
</dbReference>
<dbReference type="GO" id="GO:0043525">
    <property type="term" value="P:positive regulation of neuron apoptotic process"/>
    <property type="evidence" value="ECO:0007669"/>
    <property type="project" value="EnsemblMetazoa"/>
</dbReference>
<dbReference type="GO" id="GO:0099533">
    <property type="term" value="P:positive regulation of presynaptic cytosolic calcium concentration"/>
    <property type="evidence" value="ECO:0007669"/>
    <property type="project" value="EnsemblMetazoa"/>
</dbReference>
<dbReference type="GO" id="GO:0048488">
    <property type="term" value="P:synaptic vesicle endocytosis"/>
    <property type="evidence" value="ECO:0000250"/>
    <property type="project" value="UniProtKB"/>
</dbReference>
<dbReference type="InterPro" id="IPR019365">
    <property type="entry name" value="TVP18/Ca-channel_flower"/>
</dbReference>
<dbReference type="PANTHER" id="PTHR13314">
    <property type="entry name" value="CALCIUM CHANNEL FLOWER HOMOLOG"/>
    <property type="match status" value="1"/>
</dbReference>
<dbReference type="PANTHER" id="PTHR13314:SF2">
    <property type="entry name" value="CALCIUM CHANNEL FLOWER HOMOLOG"/>
    <property type="match status" value="1"/>
</dbReference>
<dbReference type="Pfam" id="PF10233">
    <property type="entry name" value="Cg6151-P"/>
    <property type="match status" value="1"/>
</dbReference>
<dbReference type="SMART" id="SM01077">
    <property type="entry name" value="Cg6151-P"/>
    <property type="match status" value="1"/>
</dbReference>
<accession>B4MXW6</accession>
<feature type="chain" id="PRO_0000389240" description="Calcium channel flower">
    <location>
        <begin position="1"/>
        <end position="201"/>
    </location>
</feature>
<feature type="transmembrane region" description="Helical" evidence="2">
    <location>
        <begin position="37"/>
        <end position="57"/>
    </location>
</feature>
<feature type="transmembrane region" description="Helical" evidence="2">
    <location>
        <begin position="59"/>
        <end position="79"/>
    </location>
</feature>
<feature type="transmembrane region" description="Helical" evidence="2">
    <location>
        <begin position="103"/>
        <end position="120"/>
    </location>
</feature>
<feature type="site" description="Calcium ion selectivity" evidence="1">
    <location>
        <position position="81"/>
    </location>
</feature>
<evidence type="ECO:0000250" key="1">
    <source>
        <dbReference type="UniProtKB" id="Q95T12"/>
    </source>
</evidence>
<evidence type="ECO:0000255" key="2"/>
<evidence type="ECO:0000305" key="3"/>
<evidence type="ECO:0000312" key="4">
    <source>
        <dbReference type="EMBL" id="EDW76885.1"/>
    </source>
</evidence>